<gene>
    <name evidence="1" type="primary">gmk</name>
    <name type="ordered locus">spr1583</name>
</gene>
<dbReference type="EC" id="2.7.4.8" evidence="1"/>
<dbReference type="EMBL" id="AE007317">
    <property type="protein sequence ID" value="AAL00386.1"/>
    <property type="molecule type" value="Genomic_DNA"/>
</dbReference>
<dbReference type="PIR" id="E98069">
    <property type="entry name" value="E98069"/>
</dbReference>
<dbReference type="RefSeq" id="NP_359175.1">
    <property type="nucleotide sequence ID" value="NC_003098.1"/>
</dbReference>
<dbReference type="RefSeq" id="WP_000775044.1">
    <property type="nucleotide sequence ID" value="NC_003098.1"/>
</dbReference>
<dbReference type="SMR" id="Q8DNR5"/>
<dbReference type="STRING" id="171101.spr1583"/>
<dbReference type="KEGG" id="spr:spr1583"/>
<dbReference type="PATRIC" id="fig|171101.6.peg.1710"/>
<dbReference type="eggNOG" id="COG0194">
    <property type="taxonomic scope" value="Bacteria"/>
</dbReference>
<dbReference type="HOGENOM" id="CLU_001715_1_2_9"/>
<dbReference type="Proteomes" id="UP000000586">
    <property type="component" value="Chromosome"/>
</dbReference>
<dbReference type="GO" id="GO:0005829">
    <property type="term" value="C:cytosol"/>
    <property type="evidence" value="ECO:0000318"/>
    <property type="project" value="GO_Central"/>
</dbReference>
<dbReference type="GO" id="GO:0005524">
    <property type="term" value="F:ATP binding"/>
    <property type="evidence" value="ECO:0007669"/>
    <property type="project" value="UniProtKB-UniRule"/>
</dbReference>
<dbReference type="GO" id="GO:0004385">
    <property type="term" value="F:guanylate kinase activity"/>
    <property type="evidence" value="ECO:0000318"/>
    <property type="project" value="GO_Central"/>
</dbReference>
<dbReference type="CDD" id="cd00071">
    <property type="entry name" value="GMPK"/>
    <property type="match status" value="1"/>
</dbReference>
<dbReference type="FunFam" id="3.40.50.300:FF:000855">
    <property type="entry name" value="Guanylate kinase"/>
    <property type="match status" value="1"/>
</dbReference>
<dbReference type="FunFam" id="3.30.63.10:FF:000002">
    <property type="entry name" value="Guanylate kinase 1"/>
    <property type="match status" value="1"/>
</dbReference>
<dbReference type="Gene3D" id="3.30.63.10">
    <property type="entry name" value="Guanylate Kinase phosphate binding domain"/>
    <property type="match status" value="1"/>
</dbReference>
<dbReference type="Gene3D" id="3.40.50.300">
    <property type="entry name" value="P-loop containing nucleotide triphosphate hydrolases"/>
    <property type="match status" value="1"/>
</dbReference>
<dbReference type="HAMAP" id="MF_00328">
    <property type="entry name" value="Guanylate_kinase"/>
    <property type="match status" value="1"/>
</dbReference>
<dbReference type="InterPro" id="IPR008145">
    <property type="entry name" value="GK/Ca_channel_bsu"/>
</dbReference>
<dbReference type="InterPro" id="IPR008144">
    <property type="entry name" value="Guanylate_kin-like_dom"/>
</dbReference>
<dbReference type="InterPro" id="IPR017665">
    <property type="entry name" value="Guanylate_kinase"/>
</dbReference>
<dbReference type="InterPro" id="IPR020590">
    <property type="entry name" value="Guanylate_kinase_CS"/>
</dbReference>
<dbReference type="InterPro" id="IPR027417">
    <property type="entry name" value="P-loop_NTPase"/>
</dbReference>
<dbReference type="NCBIfam" id="TIGR03263">
    <property type="entry name" value="guanyl_kin"/>
    <property type="match status" value="1"/>
</dbReference>
<dbReference type="PANTHER" id="PTHR23117:SF13">
    <property type="entry name" value="GUANYLATE KINASE"/>
    <property type="match status" value="1"/>
</dbReference>
<dbReference type="PANTHER" id="PTHR23117">
    <property type="entry name" value="GUANYLATE KINASE-RELATED"/>
    <property type="match status" value="1"/>
</dbReference>
<dbReference type="Pfam" id="PF00625">
    <property type="entry name" value="Guanylate_kin"/>
    <property type="match status" value="1"/>
</dbReference>
<dbReference type="SMART" id="SM00072">
    <property type="entry name" value="GuKc"/>
    <property type="match status" value="1"/>
</dbReference>
<dbReference type="SUPFAM" id="SSF52540">
    <property type="entry name" value="P-loop containing nucleoside triphosphate hydrolases"/>
    <property type="match status" value="1"/>
</dbReference>
<dbReference type="PROSITE" id="PS00856">
    <property type="entry name" value="GUANYLATE_KINASE_1"/>
    <property type="match status" value="1"/>
</dbReference>
<dbReference type="PROSITE" id="PS50052">
    <property type="entry name" value="GUANYLATE_KINASE_2"/>
    <property type="match status" value="1"/>
</dbReference>
<organism>
    <name type="scientific">Streptococcus pneumoniae (strain ATCC BAA-255 / R6)</name>
    <dbReference type="NCBI Taxonomy" id="171101"/>
    <lineage>
        <taxon>Bacteria</taxon>
        <taxon>Bacillati</taxon>
        <taxon>Bacillota</taxon>
        <taxon>Bacilli</taxon>
        <taxon>Lactobacillales</taxon>
        <taxon>Streptococcaceae</taxon>
        <taxon>Streptococcus</taxon>
    </lineage>
</organism>
<sequence>MADRGLLIVFSGPSGVGKGTVRREIFESSENQFQYSVSMTTRAQRPGEVDGVDYFFRTREEFEELIRQGQMLEYAEYVGNYYGTPLTYVNETLDKGIDVFLEIEVQGALQVKKKVPDAVFIFLTPPDLDELQDRLVGRGTDSAEVIAQRIEKAKEEIALMREYDYAIVNDQVSLAAERVKCVIEAEHFCVDRVIGHYQEMLPKSPTTR</sequence>
<feature type="chain" id="PRO_0000170619" description="Guanylate kinase">
    <location>
        <begin position="1"/>
        <end position="208"/>
    </location>
</feature>
<feature type="domain" description="Guanylate kinase-like" evidence="1">
    <location>
        <begin position="5"/>
        <end position="184"/>
    </location>
</feature>
<feature type="binding site" evidence="1">
    <location>
        <begin position="12"/>
        <end position="19"/>
    </location>
    <ligand>
        <name>ATP</name>
        <dbReference type="ChEBI" id="CHEBI:30616"/>
    </ligand>
</feature>
<keyword id="KW-0067">ATP-binding</keyword>
<keyword id="KW-0963">Cytoplasm</keyword>
<keyword id="KW-0418">Kinase</keyword>
<keyword id="KW-0547">Nucleotide-binding</keyword>
<keyword id="KW-1185">Reference proteome</keyword>
<keyword id="KW-0808">Transferase</keyword>
<comment type="function">
    <text evidence="1">Essential for recycling GMP and indirectly, cGMP.</text>
</comment>
<comment type="catalytic activity">
    <reaction evidence="1">
        <text>GMP + ATP = GDP + ADP</text>
        <dbReference type="Rhea" id="RHEA:20780"/>
        <dbReference type="ChEBI" id="CHEBI:30616"/>
        <dbReference type="ChEBI" id="CHEBI:58115"/>
        <dbReference type="ChEBI" id="CHEBI:58189"/>
        <dbReference type="ChEBI" id="CHEBI:456216"/>
        <dbReference type="EC" id="2.7.4.8"/>
    </reaction>
</comment>
<comment type="subcellular location">
    <subcellularLocation>
        <location evidence="1">Cytoplasm</location>
    </subcellularLocation>
</comment>
<comment type="similarity">
    <text evidence="1">Belongs to the guanylate kinase family.</text>
</comment>
<name>KGUA_STRR6</name>
<evidence type="ECO:0000255" key="1">
    <source>
        <dbReference type="HAMAP-Rule" id="MF_00328"/>
    </source>
</evidence>
<proteinExistence type="inferred from homology"/>
<protein>
    <recommendedName>
        <fullName evidence="1">Guanylate kinase</fullName>
        <ecNumber evidence="1">2.7.4.8</ecNumber>
    </recommendedName>
    <alternativeName>
        <fullName evidence="1">GMP kinase</fullName>
    </alternativeName>
</protein>
<reference key="1">
    <citation type="journal article" date="2001" name="J. Bacteriol.">
        <title>Genome of the bacterium Streptococcus pneumoniae strain R6.</title>
        <authorList>
            <person name="Hoskins J."/>
            <person name="Alborn W.E. Jr."/>
            <person name="Arnold J."/>
            <person name="Blaszczak L.C."/>
            <person name="Burgett S."/>
            <person name="DeHoff B.S."/>
            <person name="Estrem S.T."/>
            <person name="Fritz L."/>
            <person name="Fu D.-J."/>
            <person name="Fuller W."/>
            <person name="Geringer C."/>
            <person name="Gilmour R."/>
            <person name="Glass J.S."/>
            <person name="Khoja H."/>
            <person name="Kraft A.R."/>
            <person name="Lagace R.E."/>
            <person name="LeBlanc D.J."/>
            <person name="Lee L.N."/>
            <person name="Lefkowitz E.J."/>
            <person name="Lu J."/>
            <person name="Matsushima P."/>
            <person name="McAhren S.M."/>
            <person name="McHenney M."/>
            <person name="McLeaster K."/>
            <person name="Mundy C.W."/>
            <person name="Nicas T.I."/>
            <person name="Norris F.H."/>
            <person name="O'Gara M."/>
            <person name="Peery R.B."/>
            <person name="Robertson G.T."/>
            <person name="Rockey P."/>
            <person name="Sun P.-M."/>
            <person name="Winkler M.E."/>
            <person name="Yang Y."/>
            <person name="Young-Bellido M."/>
            <person name="Zhao G."/>
            <person name="Zook C.A."/>
            <person name="Baltz R.H."/>
            <person name="Jaskunas S.R."/>
            <person name="Rosteck P.R. Jr."/>
            <person name="Skatrud P.L."/>
            <person name="Glass J.I."/>
        </authorList>
    </citation>
    <scope>NUCLEOTIDE SEQUENCE [LARGE SCALE GENOMIC DNA]</scope>
    <source>
        <strain>ATCC BAA-255 / R6</strain>
    </source>
</reference>
<accession>Q8DNR5</accession>